<evidence type="ECO:0000250" key="1">
    <source>
        <dbReference type="UniProtKB" id="Q06GJ0"/>
    </source>
</evidence>
<evidence type="ECO:0000255" key="2"/>
<evidence type="ECO:0000255" key="3">
    <source>
        <dbReference type="PIRNR" id="PIRNR001093"/>
    </source>
</evidence>
<evidence type="ECO:0000255" key="4">
    <source>
        <dbReference type="PROSITE-ProRule" id="PRU00498"/>
    </source>
</evidence>
<evidence type="ECO:0000269" key="5">
    <source>
    </source>
</evidence>
<evidence type="ECO:0000269" key="6">
    <source>
    </source>
</evidence>
<evidence type="ECO:0000269" key="7">
    <source>
    </source>
</evidence>
<evidence type="ECO:0000269" key="8">
    <source>
    </source>
</evidence>
<evidence type="ECO:0000269" key="9">
    <source>
    </source>
</evidence>
<evidence type="ECO:0000269" key="10">
    <source>
    </source>
</evidence>
<evidence type="ECO:0000269" key="11">
    <source>
    </source>
</evidence>
<evidence type="ECO:0000269" key="12">
    <source ref="7"/>
</evidence>
<evidence type="ECO:0000303" key="13">
    <source>
    </source>
</evidence>
<evidence type="ECO:0000303" key="14">
    <source>
    </source>
</evidence>
<evidence type="ECO:0000303" key="15">
    <source>
    </source>
</evidence>
<evidence type="ECO:0000303" key="16">
    <source>
    </source>
</evidence>
<evidence type="ECO:0000303" key="17">
    <source>
    </source>
</evidence>
<evidence type="ECO:0000303" key="18">
    <source>
    </source>
</evidence>
<evidence type="ECO:0000303" key="19">
    <source>
    </source>
</evidence>
<evidence type="ECO:0000303" key="20">
    <source ref="7"/>
</evidence>
<evidence type="ECO:0000305" key="21"/>
<evidence type="ECO:0000305" key="22">
    <source>
    </source>
</evidence>
<evidence type="ECO:0000305" key="23">
    <source>
    </source>
</evidence>
<evidence type="ECO:0000305" key="24">
    <source>
    </source>
</evidence>
<evidence type="ECO:0000305" key="25">
    <source ref="7"/>
</evidence>
<evidence type="ECO:0000312" key="26">
    <source>
        <dbReference type="EMBL" id="AAM13977.1"/>
    </source>
</evidence>
<evidence type="ECO:0000312" key="27">
    <source>
        <dbReference type="EMBL" id="BAC41255.1"/>
    </source>
</evidence>
<evidence type="ECO:0000312" key="28">
    <source>
        <dbReference type="EMBL" id="OOO13099.1"/>
    </source>
</evidence>
<evidence type="ECO:0000312" key="29">
    <source>
        <dbReference type="Proteomes" id="UP000190312"/>
    </source>
</evidence>
<evidence type="ECO:0007744" key="30">
    <source>
        <dbReference type="PDB" id="5OAR"/>
    </source>
</evidence>
<evidence type="ECO:0007829" key="31">
    <source>
        <dbReference type="PDB" id="5OAR"/>
    </source>
</evidence>
<dbReference type="EC" id="3.2.1.52" evidence="5 6 7 8 9 10 11 12"/>
<dbReference type="EMBL" id="AY091636">
    <property type="protein sequence ID" value="AAM13977.1"/>
    <property type="molecule type" value="Genomic_DNA"/>
</dbReference>
<dbReference type="EMBL" id="AB085840">
    <property type="protein sequence ID" value="BAC41255.1"/>
    <property type="molecule type" value="Genomic_DNA"/>
</dbReference>
<dbReference type="EMBL" id="MKZY01000002">
    <property type="protein sequence ID" value="OOO13099.1"/>
    <property type="molecule type" value="Genomic_DNA"/>
</dbReference>
<dbReference type="PDB" id="5OAR">
    <property type="method" value="X-ray"/>
    <property type="resolution" value="2.30 A"/>
    <property type="chains" value="A/C=19-96, B/D=102-600"/>
</dbReference>
<dbReference type="PDBsum" id="5OAR"/>
<dbReference type="SMR" id="Q8J2T0"/>
<dbReference type="CAZy" id="GH20">
    <property type="family name" value="Glycoside Hydrolase Family 20"/>
</dbReference>
<dbReference type="GlyCosmos" id="Q8J2T0">
    <property type="glycosylation" value="9 sites, No reported glycans"/>
</dbReference>
<dbReference type="iPTMnet" id="Q8J2T0"/>
<dbReference type="VEuPathDB" id="FungiDB:AO090005000639"/>
<dbReference type="eggNOG" id="KOG2499">
    <property type="taxonomic scope" value="Eukaryota"/>
</dbReference>
<dbReference type="OMA" id="KMWPRAA"/>
<dbReference type="BRENDA" id="3.2.1.52">
    <property type="organism ID" value="522"/>
</dbReference>
<dbReference type="Proteomes" id="UP000190312">
    <property type="component" value="Unassembled WGS sequence"/>
</dbReference>
<dbReference type="GO" id="GO:0005576">
    <property type="term" value="C:extracellular region"/>
    <property type="evidence" value="ECO:0007669"/>
    <property type="project" value="UniProtKB-SubCell"/>
</dbReference>
<dbReference type="GO" id="GO:0016020">
    <property type="term" value="C:membrane"/>
    <property type="evidence" value="ECO:0007669"/>
    <property type="project" value="TreeGrafter"/>
</dbReference>
<dbReference type="GO" id="GO:0016231">
    <property type="term" value="F:beta-N-acetylglucosaminidase activity"/>
    <property type="evidence" value="ECO:0007669"/>
    <property type="project" value="TreeGrafter"/>
</dbReference>
<dbReference type="GO" id="GO:0030203">
    <property type="term" value="P:glycosaminoglycan metabolic process"/>
    <property type="evidence" value="ECO:0007669"/>
    <property type="project" value="TreeGrafter"/>
</dbReference>
<dbReference type="GO" id="GO:0000272">
    <property type="term" value="P:polysaccharide catabolic process"/>
    <property type="evidence" value="ECO:0007669"/>
    <property type="project" value="UniProtKB-KW"/>
</dbReference>
<dbReference type="CDD" id="cd06562">
    <property type="entry name" value="GH20_HexA_HexB-like"/>
    <property type="match status" value="1"/>
</dbReference>
<dbReference type="FunFam" id="3.20.20.80:FF:000063">
    <property type="entry name" value="Beta-hexosaminidase"/>
    <property type="match status" value="1"/>
</dbReference>
<dbReference type="FunFam" id="3.30.379.10:FF:000003">
    <property type="entry name" value="Beta-hexosaminidase"/>
    <property type="match status" value="1"/>
</dbReference>
<dbReference type="Gene3D" id="3.30.379.10">
    <property type="entry name" value="Chitobiase/beta-hexosaminidase domain 2-like"/>
    <property type="match status" value="1"/>
</dbReference>
<dbReference type="Gene3D" id="3.20.20.80">
    <property type="entry name" value="Glycosidases"/>
    <property type="match status" value="1"/>
</dbReference>
<dbReference type="InterPro" id="IPR025705">
    <property type="entry name" value="Beta_hexosaminidase_sua/sub"/>
</dbReference>
<dbReference type="InterPro" id="IPR015883">
    <property type="entry name" value="Glyco_hydro_20_cat"/>
</dbReference>
<dbReference type="InterPro" id="IPR017853">
    <property type="entry name" value="Glycoside_hydrolase_SF"/>
</dbReference>
<dbReference type="InterPro" id="IPR029018">
    <property type="entry name" value="Hex-like_dom2"/>
</dbReference>
<dbReference type="InterPro" id="IPR029019">
    <property type="entry name" value="HEX_eukaryotic_N"/>
</dbReference>
<dbReference type="PANTHER" id="PTHR22600">
    <property type="entry name" value="BETA-HEXOSAMINIDASE"/>
    <property type="match status" value="1"/>
</dbReference>
<dbReference type="PANTHER" id="PTHR22600:SF26">
    <property type="entry name" value="BETA-N-ACETYLHEXOSAMINIDASE"/>
    <property type="match status" value="1"/>
</dbReference>
<dbReference type="Pfam" id="PF00728">
    <property type="entry name" value="Glyco_hydro_20"/>
    <property type="match status" value="1"/>
</dbReference>
<dbReference type="Pfam" id="PF14845">
    <property type="entry name" value="Glycohydro_20b2"/>
    <property type="match status" value="1"/>
</dbReference>
<dbReference type="PIRSF" id="PIRSF001093">
    <property type="entry name" value="B-hxosamndse_ab_euk"/>
    <property type="match status" value="1"/>
</dbReference>
<dbReference type="PRINTS" id="PR00738">
    <property type="entry name" value="GLHYDRLASE20"/>
</dbReference>
<dbReference type="SUPFAM" id="SSF51445">
    <property type="entry name" value="(Trans)glycosidases"/>
    <property type="match status" value="1"/>
</dbReference>
<dbReference type="SUPFAM" id="SSF55545">
    <property type="entry name" value="beta-N-acetylhexosaminidase-like domain"/>
    <property type="match status" value="1"/>
</dbReference>
<keyword id="KW-0002">3D-structure</keyword>
<keyword id="KW-0119">Carbohydrate metabolism</keyword>
<keyword id="KW-0165">Cleavage on pair of basic residues</keyword>
<keyword id="KW-0903">Direct protein sequencing</keyword>
<keyword id="KW-1015">Disulfide bond</keyword>
<keyword id="KW-0325">Glycoprotein</keyword>
<keyword id="KW-0326">Glycosidase</keyword>
<keyword id="KW-0378">Hydrolase</keyword>
<keyword id="KW-0624">Polysaccharide degradation</keyword>
<keyword id="KW-0964">Secreted</keyword>
<keyword id="KW-0732">Signal</keyword>
<gene>
    <name evidence="14 27" type="primary">nagA</name>
    <name evidence="15 16 26" type="synonym">hexA</name>
    <name evidence="28" type="ORF">OAory_01008480</name>
</gene>
<proteinExistence type="evidence at protein level"/>
<reference evidence="26" key="1">
    <citation type="journal article" date="2004" name="Biochem. Soc. Trans.">
        <title>N-glycosylated catalytic unit meets O-glycosylated propeptide: complex protein architecture in a fungal hexosaminidase.</title>
        <authorList>
            <person name="Plihal O."/>
            <person name="Sklenar J."/>
            <person name="Kmonickova J."/>
            <person name="Man P."/>
            <person name="Pompach P."/>
            <person name="Havlicek V."/>
            <person name="Kren V."/>
            <person name="Bezouska K."/>
        </authorList>
    </citation>
    <scope>NUCLEOTIDE SEQUENCE [GENOMIC DNA]</scope>
    <scope>CATALYTIC ACTIVITY</scope>
    <scope>ACTIVITY REGULATION</scope>
    <scope>BIOPHYSICOCHEMICAL PROPERTIES</scope>
    <scope>SUBUNIT</scope>
    <scope>SUBCELLULAR LOCATION</scope>
    <scope>PTM</scope>
    <source>
        <strain evidence="15">CCF 1066</strain>
    </source>
</reference>
<reference key="2">
    <citation type="journal article" date="2007" name="Biochemistry">
        <title>Large propeptides of fungal beta-N-acetylhexosaminidases are novel enzyme regulators that must be intracellularly processed to control activity, dimerization, and secretion into the extracellular environment.</title>
        <authorList>
            <person name="Plihal O."/>
            <person name="Sklenar J."/>
            <person name="Hofbauerova K."/>
            <person name="Novak P."/>
            <person name="Man P."/>
            <person name="Pompach P."/>
            <person name="Kavan D."/>
            <person name="Ryslava H."/>
            <person name="Weignerova L."/>
            <person name="Charvatova-Pisvejcova A."/>
            <person name="Kren V."/>
            <person name="Bezouska K."/>
        </authorList>
    </citation>
    <scope>NUCLEOTIDE SEQUENCE [GENOMIC DNA]</scope>
    <scope>PROTEIN SEQUENCE OF 19-28; 19-37; 102-111; 102-131; 239-247; 397-411 AND 532-541</scope>
    <scope>FUNCTION</scope>
    <scope>CATALYTIC ACTIVITY</scope>
    <scope>ACTIVITY REGULATION</scope>
    <scope>BIOPHYSICOCHEMICAL PROPERTIES</scope>
    <scope>SUBUNIT</scope>
    <scope>SUBCELLULAR LOCATION</scope>
    <scope>PTM</scope>
    <scope>IDENTIFICATION BY MASS SPECTROMETRY</scope>
    <source>
        <strain evidence="16">CCF 1066</strain>
        <tissue evidence="16">Mycelium</tissue>
    </source>
</reference>
<reference evidence="27" key="3">
    <citation type="journal article" date="2003" name="Biosci. Biotechnol. Biochem.">
        <title>Cloning and overexpression of beta-N-acetylglucosaminidase encoding gene nagA from Aspergillus oryzae and enzyme-catalyzed synthesis of human milk oligosaccharide.</title>
        <authorList>
            <person name="Matsuo I."/>
            <person name="Kim S."/>
            <person name="Yamamoto Y."/>
            <person name="Ajisaka K."/>
            <person name="Maruyama J.I."/>
            <person name="Nakajima H."/>
            <person name="Kitamoto K."/>
        </authorList>
    </citation>
    <scope>NUCLEOTIDE SEQUENCE [GENOMIC DNA]</scope>
    <scope>FUNCTION</scope>
    <scope>CATALYTIC ACTIVITY</scope>
    <scope>BIOPHYSICOCHEMICAL PROPERTIES</scope>
    <scope>SUBCELLULAR LOCATION</scope>
    <scope>BIOTECHNOLOGY</scope>
    <source>
        <strain evidence="14">RIB 40</strain>
    </source>
</reference>
<reference evidence="28 29" key="4">
    <citation type="journal article" date="2018" name="Curr. Microbiol.">
        <title>Genome Characterization of Oleaginous Aspergillus oryzae BCC7051: A Potential Fungal-Based Platform for Lipid Production.</title>
        <authorList>
            <person name="Thammarongtham C."/>
            <person name="Nookaew I."/>
            <person name="Vorapreeda T."/>
            <person name="Srisuk T."/>
            <person name="Land M.L."/>
            <person name="Jeennor S."/>
            <person name="Laoteng K."/>
        </authorList>
    </citation>
    <scope>NUCLEOTIDE SEQUENCE [LARGE SCALE GENOMIC DNA]</scope>
    <source>
        <strain evidence="28 29">BCC7051</strain>
    </source>
</reference>
<reference key="5">
    <citation type="journal article" date="2011" name="Acta Crystallogr. F">
        <title>Crystallization and diffraction analysis of beta-N-acetylhexosaminidase from Aspergillus oryzae.</title>
        <authorList>
            <person name="Vanek O."/>
            <person name="Brynda J."/>
            <person name="Hofbauerova K."/>
            <person name="Kukacka Z."/>
            <person name="Pachl P."/>
            <person name="Bezouska K."/>
            <person name="Rezacova P."/>
        </authorList>
    </citation>
    <scope>PROTEIN SEQUENCE OF 19-28 AND 102-111</scope>
    <scope>CRYSTALLIZATION</scope>
    <scope>FUNCTION</scope>
    <scope>CATALYTIC ACTIVITY</scope>
    <scope>SUBUNIT</scope>
    <scope>SUBCELLULAR LOCATION</scope>
    <scope>PTM</scope>
    <source>
        <strain evidence="18">CCF 1066</strain>
    </source>
</reference>
<reference key="6">
    <citation type="journal article" date="2007" name="BMC Struct. Biol.">
        <title>Structure of the dimeric N-glycosylated form of fungal beta-N-acetylhexosaminidase revealed by computer modeling, vibrational spectroscopy, and biochemical studies.</title>
        <authorList>
            <person name="Ettrich R."/>
            <person name="Kopecky V. Jr."/>
            <person name="Hofbauerova K."/>
            <person name="Baumruk V."/>
            <person name="Novak P."/>
            <person name="Pompach P."/>
            <person name="Man P."/>
            <person name="Plihal O."/>
            <person name="Kuty M."/>
            <person name="Kulik N."/>
            <person name="Sklenar J."/>
            <person name="Ryslava H."/>
            <person name="Kren V."/>
            <person name="Bezouska K."/>
        </authorList>
    </citation>
    <scope>PROTEIN SEQUENCE OF 445-453 AND 474-488</scope>
    <scope>3D-STRUCTURE MODELING OF THE CATALYTIC DOMAIN AND ITS COMPLEX WITH SUBSTRATE CHITOBIOSE</scope>
    <scope>FUNCTION</scope>
    <scope>CATALYTIC ACTIVITY</scope>
    <scope>BIOPHYSICOCHEMICAL PROPERTIES</scope>
    <scope>SUBUNIT</scope>
    <scope>SUBCELLULAR LOCATION</scope>
    <scope>IDENTIFICATION BY MASS SPECTROMETRY</scope>
    <scope>GLYCOSYLATION AT ASN-428 AND ASN-500</scope>
    <scope>DISULFIDE BONDS</scope>
    <source>
        <strain evidence="17">CCF 1066</strain>
    </source>
</reference>
<reference key="7">
    <citation type="journal article" date="2003" name="Adv. Synth. Catal.">
        <title>Enzymatic discrimination of 2-acetamido-2-deoxy-D-mannopyranose-containing disaccharides using beta-N-acetylhexosaminidases.</title>
        <authorList>
            <person name="Husakova L."/>
            <person name="Herkommerova-Rajnochova E."/>
            <person name="Semenuk T."/>
            <person name="Kuzma M."/>
            <person name="Rauvolfova J."/>
            <person name="Prikrylova V."/>
            <person name="Ettrich R."/>
            <person name="Plihal O."/>
            <person name="Bezouska K."/>
            <person name="Kren V."/>
        </authorList>
    </citation>
    <scope>3D-STRUCTURE MODELING OF THE ACTIVE CENTER IN COMPLEXES WITH DISACCHARIDES</scope>
    <scope>FUNCTION</scope>
    <scope>CATALYTIC ACTIVITY</scope>
    <scope>SUBSTRATE SPECIFICITY</scope>
    <scope>REACTION MECHANISM</scope>
    <scope>BIOTECHNOLOGY</scope>
    <source>
        <strain evidence="20">CCF 1066</strain>
    </source>
</reference>
<reference key="8">
    <citation type="journal article" date="2003" name="Carbohydr. Res.">
        <title>Fungal beta-N-acetylhexosaminidases with high beta-N-acetylgalactosaminidase activity and their use for synthesis of beta-GalNAc-containing oligosaccharides.</title>
        <authorList>
            <person name="Weignerova L."/>
            <person name="Vavruskova P."/>
            <person name="Pisvejcova A."/>
            <person name="Thiem J."/>
            <person name="Kren V."/>
        </authorList>
    </citation>
    <scope>CATALYTIC ACTIVITY</scope>
    <scope>SUBCELLULAR LOCATION</scope>
    <scope>BIOTECHNOLOGY</scope>
    <source>
        <strain evidence="13">CCF 1066</strain>
    </source>
</reference>
<reference evidence="30" key="9">
    <citation type="journal article" date="2018" name="FEBS J.">
        <title>Crystal structure of native beta-N-acetylhexosaminidase isolated from Aspergillusoryzae sheds light onto its substrate specificity, high stability, and regulation by propeptide.</title>
        <authorList>
            <person name="Skerlova J."/>
            <person name="Blaha J."/>
            <person name="Pachl P."/>
            <person name="Hofbauerova K."/>
            <person name="Kukacka Z."/>
            <person name="Man P."/>
            <person name="Pompach P."/>
            <person name="Novak P."/>
            <person name="Otwinowski Z."/>
            <person name="Brynda J."/>
            <person name="Vanek O."/>
            <person name="Rezacova P."/>
        </authorList>
    </citation>
    <scope>X-RAY CRYSTALLOGRAPHY (2.30 ANGSTROMS) OF 19-96 AND 102-600 IN COMPLEX WITH NAG-THIAZOLINE INHIBITOR</scope>
    <scope>FUNCTION</scope>
    <scope>CATALYTIC ACTIVITY</scope>
    <scope>ACTIVITY REGULATION</scope>
    <scope>SUBUNIT</scope>
    <scope>SUBCELLULAR LOCATION</scope>
    <scope>PTM</scope>
    <scope>IDENTIFICATION BY MASS SPECTROMETRY</scope>
    <scope>BIOTECHNOLOGY</scope>
    <scope>ACTIVE SITES</scope>
    <scope>GLYCOSYLATION AT THR-78; SER-83; SER-84; ASN-318; ASN-353; ASN-387; ASN-428 AND ASN-500</scope>
    <scope>DISULFIDE BONDS</scope>
    <source>
        <strain evidence="19">CCF 1066</strain>
    </source>
</reference>
<feature type="signal peptide" evidence="2 22 23 24">
    <location>
        <begin position="1"/>
        <end position="18"/>
    </location>
</feature>
<feature type="propeptide" id="PRO_0000452799" evidence="22 23 24">
    <location>
        <begin position="19"/>
        <end position="96"/>
    </location>
</feature>
<feature type="chain" id="PRO_5014107425" description="Beta-hexosaminidase" evidence="22 23 24">
    <location>
        <begin position="102"/>
        <end position="600"/>
    </location>
</feature>
<feature type="active site" description="Charge relay system" evidence="1 24 30">
    <location>
        <position position="222"/>
    </location>
</feature>
<feature type="active site" description="Charge relay system" evidence="1 24 30">
    <location>
        <position position="275"/>
    </location>
</feature>
<feature type="active site" description="Charge relay system" evidence="1 24 30">
    <location>
        <position position="346"/>
    </location>
</feature>
<feature type="site" description="Important determinant of glycosidic bond specificity" evidence="1">
    <location>
        <position position="306"/>
    </location>
</feature>
<feature type="site" description="Essential for chitooligosaccharide substrate binding" evidence="1">
    <location>
        <position position="307"/>
    </location>
</feature>
<feature type="site" description="Essential for chitooligosaccharide substrate binding" evidence="1">
    <location>
        <position position="482"/>
    </location>
</feature>
<feature type="site" description="Not glycosylated" evidence="11">
    <location>
        <position position="525"/>
    </location>
</feature>
<feature type="glycosylation site" description="O-linked (Man...) threonine" evidence="11 30">
    <location>
        <position position="78"/>
    </location>
</feature>
<feature type="glycosylation site" description="O-linked (Man...) serine" evidence="11 30">
    <location>
        <position position="83"/>
    </location>
</feature>
<feature type="glycosylation site" description="O-linked (Man...) serine" evidence="11 30">
    <location>
        <position position="84"/>
    </location>
</feature>
<feature type="glycosylation site" description="N-linked (HexNAc...) asparagine" evidence="4 11">
    <location>
        <position position="318"/>
    </location>
</feature>
<feature type="glycosylation site" description="N-linked (GlcNAc...) asparagine" evidence="4 11 30">
    <location>
        <position position="353"/>
    </location>
</feature>
<feature type="glycosylation site" description="N-linked (HexNAc...) asparagine" evidence="4 11">
    <location>
        <position position="387"/>
    </location>
</feature>
<feature type="glycosylation site" description="N-linked (GlcNAc...) asparagine" evidence="4 9 11 30">
    <location>
        <position position="428"/>
    </location>
</feature>
<feature type="glycosylation site" description="N-linked (GlcNAc...) asparagine" evidence="4 9 11 30">
    <location>
        <position position="500"/>
    </location>
</feature>
<feature type="glycosylation site" description="N-linked (GlcNAc...) asparagine" evidence="4">
    <location>
        <position position="525"/>
    </location>
</feature>
<feature type="disulfide bond" evidence="11 30">
    <location>
        <begin position="290"/>
        <end position="351"/>
    </location>
</feature>
<feature type="disulfide bond" evidence="9 11 30">
    <location>
        <begin position="448"/>
        <end position="483"/>
    </location>
</feature>
<feature type="disulfide bond" evidence="11 30">
    <location>
        <begin position="583"/>
        <end position="590"/>
    </location>
</feature>
<feature type="strand" evidence="31">
    <location>
        <begin position="28"/>
        <end position="32"/>
    </location>
</feature>
<feature type="strand" evidence="31">
    <location>
        <begin position="38"/>
        <end position="47"/>
    </location>
</feature>
<feature type="helix" evidence="31">
    <location>
        <begin position="56"/>
        <end position="71"/>
    </location>
</feature>
<feature type="strand" evidence="31">
    <location>
        <begin position="106"/>
        <end position="116"/>
    </location>
</feature>
<feature type="strand" evidence="31">
    <location>
        <begin position="128"/>
        <end position="132"/>
    </location>
</feature>
<feature type="strand" evidence="31">
    <location>
        <begin position="137"/>
        <end position="145"/>
    </location>
</feature>
<feature type="helix" evidence="31">
    <location>
        <begin position="146"/>
        <end position="157"/>
    </location>
</feature>
<feature type="strand" evidence="31">
    <location>
        <begin position="160"/>
        <end position="162"/>
    </location>
</feature>
<feature type="strand" evidence="31">
    <location>
        <begin position="164"/>
        <end position="166"/>
    </location>
</feature>
<feature type="strand" evidence="31">
    <location>
        <begin position="168"/>
        <end position="172"/>
    </location>
</feature>
<feature type="strand" evidence="31">
    <location>
        <begin position="174"/>
        <end position="178"/>
    </location>
</feature>
<feature type="strand" evidence="31">
    <location>
        <begin position="183"/>
        <end position="190"/>
    </location>
</feature>
<feature type="strand" evidence="31">
    <location>
        <begin position="192"/>
        <end position="194"/>
    </location>
</feature>
<feature type="helix" evidence="31">
    <location>
        <begin position="198"/>
        <end position="211"/>
    </location>
</feature>
<feature type="strand" evidence="31">
    <location>
        <begin position="215"/>
        <end position="219"/>
    </location>
</feature>
<feature type="helix" evidence="31">
    <location>
        <begin position="234"/>
        <end position="239"/>
    </location>
</feature>
<feature type="helix" evidence="31">
    <location>
        <begin position="249"/>
        <end position="261"/>
    </location>
</feature>
<feature type="strand" evidence="31">
    <location>
        <begin position="265"/>
        <end position="275"/>
    </location>
</feature>
<feature type="helix" evidence="31">
    <location>
        <begin position="280"/>
        <end position="283"/>
    </location>
</feature>
<feature type="helix" evidence="31">
    <location>
        <begin position="285"/>
        <end position="287"/>
    </location>
</feature>
<feature type="strand" evidence="31">
    <location>
        <begin position="288"/>
        <end position="290"/>
    </location>
</feature>
<feature type="strand" evidence="31">
    <location>
        <begin position="297"/>
        <end position="299"/>
    </location>
</feature>
<feature type="helix" evidence="31">
    <location>
        <begin position="300"/>
        <end position="302"/>
    </location>
</feature>
<feature type="strand" evidence="31">
    <location>
        <begin position="306"/>
        <end position="309"/>
    </location>
</feature>
<feature type="helix" evidence="31">
    <location>
        <begin position="320"/>
        <end position="334"/>
    </location>
</feature>
<feature type="strand" evidence="31">
    <location>
        <begin position="337"/>
        <end position="343"/>
    </location>
</feature>
<feature type="helix" evidence="31">
    <location>
        <begin position="349"/>
        <end position="354"/>
    </location>
</feature>
<feature type="helix" evidence="31">
    <location>
        <begin position="356"/>
        <end position="363"/>
    </location>
</feature>
<feature type="helix" evidence="31">
    <location>
        <begin position="370"/>
        <end position="386"/>
    </location>
</feature>
<feature type="strand" evidence="31">
    <location>
        <begin position="393"/>
        <end position="397"/>
    </location>
</feature>
<feature type="helix" evidence="31">
    <location>
        <begin position="399"/>
        <end position="402"/>
    </location>
</feature>
<feature type="strand" evidence="31">
    <location>
        <begin position="414"/>
        <end position="418"/>
    </location>
</feature>
<feature type="helix" evidence="31">
    <location>
        <begin position="423"/>
        <end position="431"/>
    </location>
</feature>
<feature type="strand" evidence="31">
    <location>
        <begin position="436"/>
        <end position="438"/>
    </location>
</feature>
<feature type="turn" evidence="31">
    <location>
        <begin position="441"/>
        <end position="443"/>
    </location>
</feature>
<feature type="turn" evidence="31">
    <location>
        <begin position="446"/>
        <end position="449"/>
    </location>
</feature>
<feature type="helix" evidence="31">
    <location>
        <begin position="458"/>
        <end position="460"/>
    </location>
</feature>
<feature type="strand" evidence="31">
    <location>
        <begin position="475"/>
        <end position="477"/>
    </location>
</feature>
<feature type="helix" evidence="31">
    <location>
        <begin position="489"/>
        <end position="493"/>
    </location>
</feature>
<feature type="turn" evidence="31">
    <location>
        <begin position="497"/>
        <end position="500"/>
    </location>
</feature>
<feature type="turn" evidence="31">
    <location>
        <begin position="503"/>
        <end position="505"/>
    </location>
</feature>
<feature type="helix" evidence="31">
    <location>
        <begin position="506"/>
        <end position="508"/>
    </location>
</feature>
<feature type="strand" evidence="31">
    <location>
        <begin position="509"/>
        <end position="516"/>
    </location>
</feature>
<feature type="helix" evidence="31">
    <location>
        <begin position="523"/>
        <end position="530"/>
    </location>
</feature>
<feature type="helix" evidence="31">
    <location>
        <begin position="533"/>
        <end position="542"/>
    </location>
</feature>
<feature type="helix" evidence="31">
    <location>
        <begin position="554"/>
        <end position="570"/>
    </location>
</feature>
<feature type="helix" evidence="31">
    <location>
        <begin position="581"/>
        <end position="585"/>
    </location>
</feature>
<feature type="turn" evidence="31">
    <location>
        <begin position="587"/>
        <end position="590"/>
    </location>
</feature>
<name>HEXA_ASPOZ</name>
<accession>Q8J2T0</accession>
<sequence length="600" mass="67525">MRISQICTVLSTVTSAVAVGVNPLPAPREISWGSSGPKSIAGELQLRTDSDSADGIVADAWNRAWETIVALRWVPAATEAPISSFEPFPTPTAGASKKSKRASNSLQYVNVQVKDIEADLQHGVDESYTLDVEEDSDTITINAETVWGALHAFTTLQQLVISDGHGGLIIEEPVNIKDSPLYPYRGIMLDTGRNFVSLPKIFEQLEGMSLSKLNVLHWHIDDAQSWPIWVDVYPEMVKDAYSPHEIYSRNDVRNIVNYARARGIRVIPEIDMPSHSSSGWKQVDPEMVTCTDSWWSNDDWPLHTAVEPNPGQLDIIYNKTYEVVGNVYKELSDIFPDHWFHVGGDEIQPNCFNFSTHVTKWFAEDPSRTYHDLAQYWVDHAVPIFQNYSQERRLVMWEDIALSADNAHDVPKNIVMQSWNNGLEYISNLTARGYDVIVSSSDFLYLDCGHGGFVTNDPRYNVMANPDANTPNFNYGGNGGSWCAPYKTWQRIYDYDFTLNLTETQAKHIIGATAPLWGEQVDDINVSSMFWPRAAALAELVWSGNRDANGNKRTTEMTQRILNFREYLVANGVQAQALVPKYCLQHPHACDLYRNQAAIQ</sequence>
<organism evidence="27">
    <name type="scientific">Aspergillus oryzae</name>
    <name type="common">Yellow koji mold</name>
    <dbReference type="NCBI Taxonomy" id="5062"/>
    <lineage>
        <taxon>Eukaryota</taxon>
        <taxon>Fungi</taxon>
        <taxon>Dikarya</taxon>
        <taxon>Ascomycota</taxon>
        <taxon>Pezizomycotina</taxon>
        <taxon>Eurotiomycetes</taxon>
        <taxon>Eurotiomycetidae</taxon>
        <taxon>Eurotiales</taxon>
        <taxon>Aspergillaceae</taxon>
        <taxon>Aspergillus</taxon>
        <taxon>Aspergillus subgen. Circumdati</taxon>
    </lineage>
</organism>
<protein>
    <recommendedName>
        <fullName evidence="3">Beta-hexosaminidase</fullName>
        <ecNumber evidence="5 6 7 8 9 10 11 12">3.2.1.52</ecNumber>
    </recommendedName>
    <alternativeName>
        <fullName evidence="19">AoHEX</fullName>
    </alternativeName>
    <alternativeName>
        <fullName evidence="14">Beta-N-acetylglucosaminidase</fullName>
    </alternativeName>
    <alternativeName>
        <fullName evidence="13 15 16 17 18 19 20">Beta-N-acetylhexosaminidase</fullName>
        <shortName evidence="16 18 19">Hex</shortName>
    </alternativeName>
</protein>
<comment type="function">
    <text evidence="6 8 9 10 11 12 21">Selectively hydrolyzes GlcNAcbeta(1-&gt;4)GlcNAc (N,N'-diacetylchitobiose) and Gal-NAcbeta(1-&gt;4)GlcNAc, but not their C-2 epimers GlcNAcbeta(1-&gt;4)ManNAc or Gal-NAcbeta(1-&gt;4)ManNAc. However, hydrolyzes both GlcNAcbeta(1-&gt;6)GlcNAc and GlcNAcbeta(1-&gt;6)ManNAc (Ref.7). Part of the binary chitinolytic system. Involved in hydrolysis of chitobiose and higher chito-oligomers (produced from cell wall chitin by endochitinases), thus contributing to the formation of germ tubes, fruit-bodies and septa during hyphenation (Probable). Hydrolyzes synthetic substrate p-nitrophenyl-beta-N-acetyl-D-glucosaminide (pNP-GlcNAc) (PubMed:12723619, PubMed:17302431, Ref.7). Hydrolyzes synthetic substrate p-nitrophenyl-beta-N-acetyl-D-galactosaminide (pNP-GalNAc) (PubMed:12723619). Hydrolyzes chromogenic substrate 4-nitrophenyl-2-acetamido-2-deoxyglucopyranoside (PubMed:17509134, PubMed:21505251, PubMed:29239122).</text>
</comment>
<comment type="catalytic activity">
    <reaction evidence="3 5 6 7 8 9 10 11 12">
        <text>Hydrolysis of terminal non-reducing N-acetyl-D-hexosamine residues in N-acetyl-beta-D-hexosaminides.</text>
        <dbReference type="EC" id="3.2.1.52"/>
    </reaction>
</comment>
<comment type="activity regulation">
    <text evidence="7 8 11">Activated by non-covalent binding of the propeptide to the catalytic domain (PubMed:15494009, PubMed:17302431, PubMed:29239122). The concentration of the propeptide is regulated in the endoplasmic reticulum and the propeptide thus regulates the amount of the active enzyme at various stages of the growth cycle (PubMed:17302431). The dimeric enzyme has about half of the maximal activity in the presence of one bound propeptide, but is fully active with two bound O-glycosylated propeptides (PubMed:15494009, PubMed:17302431). Inhibited by N-acetylglucosamine (NAG)-thiazoline (PubMed:17302431).</text>
</comment>
<comment type="biophysicochemical properties">
    <kinetics>
        <KM evidence="9">0.45 mM for 4-nitrophenyl-2-acetamido-2-deoxyglucopyranoside with native glycosylated enzyme</KM>
        <KM evidence="9">0.71 mM for 4-nitrophenyl-2-acetamido-2-deoxyglucopyranoside with N-glycan deglycosylated enzyme</KM>
    </kinetics>
    <phDependence>
        <text evidence="6 7 8 9">Optimum pH is around 5 (PubMed:12723619, PubMed:15494009, PubMed:17302431). More stable at alkaline than acidic pH (PubMed:12723619, PubMed:15494009, PubMed:17509134).</text>
    </phDependence>
    <temperatureDependence>
        <text evidence="6">Stable below 45 degrees Celsius.</text>
    </temperatureDependence>
</comment>
<comment type="subunit">
    <text evidence="7 8 9 10 11">Homodimer (PubMed:15494009, PubMed:17302431, PubMed:17509134, PubMed:21505251, PubMed:29239122). Oligosaccharide moieties may also take part in the dimerization. Dimerization is a pH-dependent reversible process (PubMed:17509134). The individual catalytic cores dimerize and the catalytic core of one subunit in the active dimer interacts with the propeptide of the second subunit (PubMed:29239122).</text>
</comment>
<comment type="subcellular location">
    <subcellularLocation>
        <location evidence="5 6 7 8 9 10 11">Secreted</location>
    </subcellularLocation>
</comment>
<comment type="PTM">
    <text evidence="7 8 10 11">The precursor of the propeptide is intracellularly processed in the endoplasmic reticulum by a dibasic peptidase, different from Kex2, removing Lys-97--Arg-101 from the precursor producing the activated propeptide (PubMed:17302431). The propeptide binds non-covalently to the catalytic domain (PubMed:15494009, PubMed:17302431, PubMed:21505251, PubMed:29239122). Propeptide binding is necessary for full activation of the enzyme, dimerization of the catalytic domain and secretion of the active enzyme (PubMed:15494009, PubMed:17302431).</text>
</comment>
<comment type="PTM">
    <text evidence="7 8 9 10 11">O-glycosylated (PubMed:15494009, PubMed:17302431, PubMed:29239122). O-glycosylation (O-mannosylation) at the C-terminus of the propeptide is necessary for full enzyme activity (PubMed:15494009). N-glycosylated (PubMed:15494009, PubMed:17302431, PubMed:17509134, PubMed:21505251, PubMed:29239122). N-glycosylation of the catalytic domain increases the stability and solubility of the enzyme, especially at low pH (PubMed:15494009, PubMed:17509134). Contains high mannose-type (M4-M11) N-glycans at the C-terminus (PubMed:15494009, PubMed:17509134, PubMed:29239122). N-glycan deglycosylation does not affect enzyme activity (PubMed:17509134).</text>
</comment>
<comment type="biotechnology">
    <text evidence="5 6 24 25">This enzyme can be used for synthesis of lacto-N-triose II (GlcNAcbeta1-3Galbeta1-4Glc), a major oligosaccharide component of human breast milk, and its positional isomer (GlcNAcbeta1-6lactose) from lactose and D-N-acetylglucosamine (GlcNAc) by reverse hydrolysis reaction (PubMed:12723619). This enzyme can also be used for selective large-scale removal of GlcNAcbeta(1-&gt;4)GlcNAc and GalNAcbeta(1-&gt;4)GlcNAc from mixtures containing them and their C-2 epimers GlcNAcbeta(1-&gt;4)ManNAc and GalNAcbeta(1-&gt;4)ManNAc in order to produce rare ManNAc-containing disaccharides that are important components of microbial cell walls, and can be utilized as immunoactive compounds (Ref.7). Utilized in the synthesis of beta-GalNAc-containing oligosaccharides beta-D-GalpNAc-(1-&gt;4)-alpha-D-GlcpNAcOAll and beta-D-GalpNAc-(1-&gt;6)-beta-D-Galp-(1-&gt;4)-alpha-D-GlcpNAcOAll (PubMed:12681926). The structural features make this enzyme suitable for biotechnological applications as it is very stable and has a robust framework. The solved three-dimensional structure will aid in designing engineered mutant enzyme variants with desired specificity and activity (PubMed:29239122).</text>
</comment>
<comment type="similarity">
    <text evidence="3">Belongs to the glycosyl hydrolase 20 family.</text>
</comment>
<comment type="caution">
    <text evidence="9 11">According to PubMed:29239122 Asn-525 is not glycosylated in contrast to PubMed:17509134, which reports that all predicted N-glycosylation sequences are glycosylated.</text>
</comment>